<gene>
    <name type="primary">HAS1</name>
    <name type="ordered locus">YMR290C</name>
</gene>
<protein>
    <recommendedName>
        <fullName>ATP-dependent RNA helicase HAS1</fullName>
        <ecNumber>3.6.4.13</ecNumber>
    </recommendedName>
    <alternativeName>
        <fullName>Helicase associated with SET1 protein 1</fullName>
    </alternativeName>
</protein>
<name>HAS1_YEAST</name>
<organism>
    <name type="scientific">Saccharomyces cerevisiae (strain ATCC 204508 / S288c)</name>
    <name type="common">Baker's yeast</name>
    <dbReference type="NCBI Taxonomy" id="559292"/>
    <lineage>
        <taxon>Eukaryota</taxon>
        <taxon>Fungi</taxon>
        <taxon>Dikarya</taxon>
        <taxon>Ascomycota</taxon>
        <taxon>Saccharomycotina</taxon>
        <taxon>Saccharomycetes</taxon>
        <taxon>Saccharomycetales</taxon>
        <taxon>Saccharomycetaceae</taxon>
        <taxon>Saccharomyces</taxon>
    </lineage>
</organism>
<sequence>MATPSNKRSRDSESTEEPVVDEKSTSKQNNAAPEGEQTTCVEKFEELKLSQPTLKAIEKMGFTTMTSVQARTIPPLLAGRDVLGAAKTGSGKTLAFLIPAIELLHSLKFKPRNGTGIIVITPTRELALQIFGVARELMEFHSQTFGIVIGGANRRQEAEKLMKGVNMLIATPGRLLDHLQNTKGFVFKNLKALIIDEADRILEIGFEDEMRQIIKILPNEDRQSMLFSATQTTKVEDLARISLRPGPLFINVVPETDNSTADGLEQGYVVCDSDKRFLLLFSFLKRNQKKKIIVFLSSCNSVKYYAELLNYIDLPVLELHGKQKQQKRTNTFFEFCNAERGILICTDVAARGLDIPAVDWIIQFDPPDDPRDYIHRVGRTARGTKGKGKSLMFLTPNELGFLRYLKASKVPLNEYEFPENKIANVQSQLEKLIKSNYYLHQTAKDGYRSYLQAYASHSLKTVYQIDKLDLAKVAKSYGFPVPPKVNITIGASGKTPNTKRRKTHK</sequence>
<comment type="function">
    <text evidence="5 7 8">ATP-dependent RNA helicase involved in 40S ribosomal subunit biogenesis. Required for the processing and cleavage of 35S pre-rRNA at sites A0, A1, and A2, leading to mature 18S rRNA.</text>
</comment>
<comment type="catalytic activity">
    <reaction>
        <text>ATP + H2O = ADP + phosphate + H(+)</text>
        <dbReference type="Rhea" id="RHEA:13065"/>
        <dbReference type="ChEBI" id="CHEBI:15377"/>
        <dbReference type="ChEBI" id="CHEBI:15378"/>
        <dbReference type="ChEBI" id="CHEBI:30616"/>
        <dbReference type="ChEBI" id="CHEBI:43474"/>
        <dbReference type="ChEBI" id="CHEBI:456216"/>
        <dbReference type="EC" id="3.6.4.13"/>
    </reaction>
</comment>
<comment type="biophysicochemical properties">
    <kinetics>
        <KM evidence="8">450 uM for ATP</KM>
    </kinetics>
    <phDependence>
        <text evidence="8">Optimum pH is 6.5. Active from pH 5 to 8.</text>
    </phDependence>
</comment>
<comment type="subunit">
    <text evidence="6 9">Interacts with RRP1. Associates in the nucleolus with the 60S and pre-60S ribosomal subunits. It has also been isolated with the nuclear pore complex.</text>
</comment>
<comment type="interaction">
    <interactant intactId="EBI-8170">
        <id>Q03532</id>
    </interactant>
    <interactant intactId="EBI-5644">
        <id>Q12389</id>
        <label>DBP10</label>
    </interactant>
    <organismsDiffer>false</organismsDiffer>
    <experiments>5</experiments>
</comment>
<comment type="interaction">
    <interactant intactId="EBI-8170">
        <id>Q03532</id>
    </interactant>
    <interactant intactId="EBI-6289">
        <id>P36049</id>
        <label>EBP2</label>
    </interactant>
    <organismsDiffer>false</organismsDiffer>
    <experiments>3</experiments>
</comment>
<comment type="interaction">
    <interactant intactId="EBI-8170">
        <id>Q03532</id>
    </interactant>
    <interactant intactId="EBI-28098">
        <id>Q04660</id>
        <label>ERB1</label>
    </interactant>
    <organismsDiffer>false</organismsDiffer>
    <experiments>6</experiments>
</comment>
<comment type="interaction">
    <interactant intactId="EBI-8170">
        <id>Q03532</id>
    </interactant>
    <interactant intactId="EBI-28537">
        <id>P53743</id>
        <label>ESF2</label>
    </interactant>
    <organismsDiffer>false</organismsDiffer>
    <experiments>2</experiments>
</comment>
<comment type="interaction">
    <interactant intactId="EBI-8170">
        <id>Q03532</id>
    </interactant>
    <interactant intactId="EBI-8170">
        <id>Q03532</id>
        <label>HAS1</label>
    </interactant>
    <organismsDiffer>false</organismsDiffer>
    <experiments>3</experiments>
</comment>
<comment type="interaction">
    <interactant intactId="EBI-8170">
        <id>Q03532</id>
    </interactant>
    <interactant intactId="EBI-5612">
        <id>P20448</id>
        <label>HCA4</label>
    </interactant>
    <organismsDiffer>false</organismsDiffer>
    <experiments>3</experiments>
</comment>
<comment type="interaction">
    <interactant intactId="EBI-8170">
        <id>Q03532</id>
    </interactant>
    <interactant intactId="EBI-22906">
        <id>P43586</id>
        <label>LOC1</label>
    </interactant>
    <organismsDiffer>false</organismsDiffer>
    <experiments>6</experiments>
</comment>
<comment type="interaction">
    <interactant intactId="EBI-8170">
        <id>Q03532</id>
    </interactant>
    <interactant intactId="EBI-10944">
        <id>Q12176</id>
        <label>MAK21</label>
    </interactant>
    <organismsDiffer>false</organismsDiffer>
    <experiments>4</experiments>
</comment>
<comment type="interaction">
    <interactant intactId="EBI-8170">
        <id>Q03532</id>
    </interactant>
    <interactant intactId="EBI-10394">
        <id>P38112</id>
        <label>MAK5</label>
    </interactant>
    <organismsDiffer>false</organismsDiffer>
    <experiments>4</experiments>
</comment>
<comment type="interaction">
    <interactant intactId="EBI-8170">
        <id>Q03532</id>
    </interactant>
    <interactant intactId="EBI-11168">
        <id>P47083</id>
        <label>MPP10</label>
    </interactant>
    <organismsDiffer>false</organismsDiffer>
    <experiments>3</experiments>
</comment>
<comment type="interaction">
    <interactant intactId="EBI-8170">
        <id>Q03532</id>
    </interactant>
    <interactant intactId="EBI-29259">
        <id>P39744</id>
        <label>NOC2</label>
    </interactant>
    <organismsDiffer>false</organismsDiffer>
    <experiments>4</experiments>
</comment>
<comment type="interaction">
    <interactant intactId="EBI-8170">
        <id>Q03532</id>
    </interactant>
    <interactant intactId="EBI-12105">
        <id>Q02892</id>
        <label>NOG1</label>
    </interactant>
    <organismsDiffer>false</organismsDiffer>
    <experiments>3</experiments>
</comment>
<comment type="interaction">
    <interactant intactId="EBI-8170">
        <id>Q03532</id>
    </interactant>
    <interactant intactId="EBI-28853">
        <id>P53927</id>
        <label>NOP15</label>
    </interactant>
    <organismsDiffer>false</organismsDiffer>
    <experiments>5</experiments>
</comment>
<comment type="interaction">
    <interactant intactId="EBI-8170">
        <id>Q03532</id>
    </interactant>
    <interactant intactId="EBI-12122">
        <id>P37838</id>
        <label>NOP4</label>
    </interactant>
    <organismsDiffer>false</organismsDiffer>
    <experiments>5</experiments>
</comment>
<comment type="interaction">
    <interactant intactId="EBI-8170">
        <id>Q03532</id>
    </interactant>
    <interactant intactId="EBI-22681">
        <id>P40078</id>
        <label>NSA2</label>
    </interactant>
    <organismsDiffer>false</organismsDiffer>
    <experiments>4</experiments>
</comment>
<comment type="interaction">
    <interactant intactId="EBI-8170">
        <id>Q03532</id>
    </interactant>
    <interactant intactId="EBI-15415">
        <id>P40693</id>
        <label>RLP7</label>
    </interactant>
    <organismsDiffer>false</organismsDiffer>
    <experiments>4</experiments>
</comment>
<comment type="interaction">
    <interactant intactId="EBI-8170">
        <id>Q03532</id>
    </interactant>
    <interactant intactId="EBI-31770">
        <id>Q12481</id>
        <label>RRP36</label>
    </interactant>
    <organismsDiffer>false</organismsDiffer>
    <experiments>2</experiments>
</comment>
<comment type="interaction">
    <interactant intactId="EBI-8170">
        <id>Q03532</id>
    </interactant>
    <interactant intactId="EBI-36084">
        <id>Q12136</id>
        <label>SAS10</label>
    </interactant>
    <organismsDiffer>false</organismsDiffer>
    <experiments>2</experiments>
</comment>
<comment type="interaction">
    <interactant intactId="EBI-8170">
        <id>Q03532</id>
    </interactant>
    <interactant intactId="EBI-29168">
        <id>P53866</id>
        <label>SQS1</label>
    </interactant>
    <organismsDiffer>false</organismsDiffer>
    <experiments>3</experiments>
</comment>
<comment type="subcellular location">
    <subcellularLocation>
        <location evidence="4 5">Nucleus</location>
        <location evidence="4 5">Nucleolus</location>
    </subcellularLocation>
</comment>
<comment type="domain">
    <text>The Q motif is unique to and characteristic of the DEAD box family of RNA helicases and controls ATP binding and hydrolysis.</text>
</comment>
<comment type="PTM">
    <text evidence="11">Phosphorylated by CDK1.</text>
</comment>
<comment type="miscellaneous">
    <text>Transcription depends partially on SET1.</text>
</comment>
<comment type="similarity">
    <text evidence="10">Belongs to the DEAD box helicase family. DDX18/HAS1 subfamily.</text>
</comment>
<accession>Q03532</accession>
<accession>D6W0B7</accession>
<keyword id="KW-0002">3D-structure</keyword>
<keyword id="KW-0067">ATP-binding</keyword>
<keyword id="KW-0347">Helicase</keyword>
<keyword id="KW-0378">Hydrolase</keyword>
<keyword id="KW-0547">Nucleotide-binding</keyword>
<keyword id="KW-0539">Nucleus</keyword>
<keyword id="KW-0597">Phosphoprotein</keyword>
<keyword id="KW-1185">Reference proteome</keyword>
<keyword id="KW-0690">Ribosome biogenesis</keyword>
<keyword id="KW-0694">RNA-binding</keyword>
<keyword id="KW-0698">rRNA processing</keyword>
<evidence type="ECO:0000255" key="1">
    <source>
        <dbReference type="PROSITE-ProRule" id="PRU00541"/>
    </source>
</evidence>
<evidence type="ECO:0000255" key="2">
    <source>
        <dbReference type="PROSITE-ProRule" id="PRU00542"/>
    </source>
</evidence>
<evidence type="ECO:0000256" key="3">
    <source>
        <dbReference type="SAM" id="MobiDB-lite"/>
    </source>
</evidence>
<evidence type="ECO:0000269" key="4">
    <source>
    </source>
</evidence>
<evidence type="ECO:0000269" key="5">
    <source>
    </source>
</evidence>
<evidence type="ECO:0000269" key="6">
    <source>
    </source>
</evidence>
<evidence type="ECO:0000269" key="7">
    <source>
    </source>
</evidence>
<evidence type="ECO:0000269" key="8">
    <source>
    </source>
</evidence>
<evidence type="ECO:0000269" key="9">
    <source>
    </source>
</evidence>
<evidence type="ECO:0000305" key="10"/>
<evidence type="ECO:0000305" key="11">
    <source>
    </source>
</evidence>
<evidence type="ECO:0007744" key="12">
    <source>
    </source>
</evidence>
<evidence type="ECO:0007744" key="13">
    <source>
    </source>
</evidence>
<evidence type="ECO:0007829" key="14">
    <source>
        <dbReference type="PDB" id="7R6Q"/>
    </source>
</evidence>
<dbReference type="EC" id="3.6.4.13"/>
<dbReference type="EMBL" id="X80836">
    <property type="protein sequence ID" value="CAA56799.1"/>
    <property type="molecule type" value="Genomic_DNA"/>
</dbReference>
<dbReference type="EMBL" id="BK006946">
    <property type="protein sequence ID" value="DAA10191.1"/>
    <property type="molecule type" value="Genomic_DNA"/>
</dbReference>
<dbReference type="PIR" id="S47451">
    <property type="entry name" value="S47451"/>
</dbReference>
<dbReference type="RefSeq" id="NP_014017.1">
    <property type="nucleotide sequence ID" value="NM_001182797.1"/>
</dbReference>
<dbReference type="PDB" id="5Z3G">
    <property type="method" value="EM"/>
    <property type="resolution" value="3.65 A"/>
    <property type="chains" value="Y=1-505"/>
</dbReference>
<dbReference type="PDB" id="6C0F">
    <property type="method" value="EM"/>
    <property type="resolution" value="3.70 A"/>
    <property type="chains" value="p=1-505"/>
</dbReference>
<dbReference type="PDB" id="6CB1">
    <property type="method" value="EM"/>
    <property type="resolution" value="4.60 A"/>
    <property type="chains" value="p=1-505"/>
</dbReference>
<dbReference type="PDB" id="6ELZ">
    <property type="method" value="EM"/>
    <property type="resolution" value="3.30 A"/>
    <property type="chains" value="D=1-505"/>
</dbReference>
<dbReference type="PDB" id="6EM1">
    <property type="method" value="EM"/>
    <property type="resolution" value="3.60 A"/>
    <property type="chains" value="D=1-505"/>
</dbReference>
<dbReference type="PDB" id="6EM3">
    <property type="method" value="EM"/>
    <property type="resolution" value="3.20 A"/>
    <property type="chains" value="D=1-505"/>
</dbReference>
<dbReference type="PDB" id="6EM4">
    <property type="method" value="EM"/>
    <property type="resolution" value="4.10 A"/>
    <property type="chains" value="D=1-505"/>
</dbReference>
<dbReference type="PDB" id="6EM5">
    <property type="method" value="EM"/>
    <property type="resolution" value="4.30 A"/>
    <property type="chains" value="D=1-505"/>
</dbReference>
<dbReference type="PDB" id="7NAC">
    <property type="method" value="EM"/>
    <property type="resolution" value="3.04 A"/>
    <property type="chains" value="D=1-505"/>
</dbReference>
<dbReference type="PDB" id="7OHP">
    <property type="method" value="EM"/>
    <property type="resolution" value="3.90 A"/>
    <property type="chains" value="D=1-505"/>
</dbReference>
<dbReference type="PDB" id="7OHR">
    <property type="method" value="EM"/>
    <property type="resolution" value="4.72 A"/>
    <property type="chains" value="D=1-505"/>
</dbReference>
<dbReference type="PDB" id="7OHS">
    <property type="method" value="EM"/>
    <property type="resolution" value="4.38 A"/>
    <property type="chains" value="D=1-505"/>
</dbReference>
<dbReference type="PDB" id="7OHV">
    <property type="method" value="EM"/>
    <property type="resolution" value="3.90 A"/>
    <property type="chains" value="D=1-505"/>
</dbReference>
<dbReference type="PDB" id="7OHW">
    <property type="method" value="EM"/>
    <property type="resolution" value="3.50 A"/>
    <property type="chains" value="D=1-505"/>
</dbReference>
<dbReference type="PDB" id="7OHX">
    <property type="method" value="EM"/>
    <property type="resolution" value="3.30 A"/>
    <property type="chains" value="D=1-505"/>
</dbReference>
<dbReference type="PDB" id="7R6Q">
    <property type="method" value="EM"/>
    <property type="resolution" value="2.98 A"/>
    <property type="chains" value="D=1-505"/>
</dbReference>
<dbReference type="PDB" id="7R7A">
    <property type="method" value="EM"/>
    <property type="resolution" value="3.04 A"/>
    <property type="chains" value="D=1-505"/>
</dbReference>
<dbReference type="PDB" id="8E5T">
    <property type="method" value="EM"/>
    <property type="resolution" value="4.00 A"/>
    <property type="chains" value="p=1-505"/>
</dbReference>
<dbReference type="PDB" id="8V83">
    <property type="method" value="EM"/>
    <property type="resolution" value="2.53 A"/>
    <property type="chains" value="D=1-505"/>
</dbReference>
<dbReference type="PDB" id="8V84">
    <property type="method" value="EM"/>
    <property type="resolution" value="2.70 A"/>
    <property type="chains" value="D=1-505"/>
</dbReference>
<dbReference type="PDB" id="8V87">
    <property type="method" value="EM"/>
    <property type="resolution" value="2.66 A"/>
    <property type="chains" value="D=1-505"/>
</dbReference>
<dbReference type="PDBsum" id="5Z3G"/>
<dbReference type="PDBsum" id="6C0F"/>
<dbReference type="PDBsum" id="6CB1"/>
<dbReference type="PDBsum" id="6ELZ"/>
<dbReference type="PDBsum" id="6EM1"/>
<dbReference type="PDBsum" id="6EM3"/>
<dbReference type="PDBsum" id="6EM4"/>
<dbReference type="PDBsum" id="6EM5"/>
<dbReference type="PDBsum" id="7NAC"/>
<dbReference type="PDBsum" id="7OHP"/>
<dbReference type="PDBsum" id="7OHR"/>
<dbReference type="PDBsum" id="7OHS"/>
<dbReference type="PDBsum" id="7OHV"/>
<dbReference type="PDBsum" id="7OHW"/>
<dbReference type="PDBsum" id="7OHX"/>
<dbReference type="PDBsum" id="7R6Q"/>
<dbReference type="PDBsum" id="7R7A"/>
<dbReference type="PDBsum" id="8E5T"/>
<dbReference type="PDBsum" id="8V83"/>
<dbReference type="PDBsum" id="8V84"/>
<dbReference type="PDBsum" id="8V87"/>
<dbReference type="EMDB" id="EMD-12904"/>
<dbReference type="EMDB" id="EMD-12906"/>
<dbReference type="EMDB" id="EMD-12907"/>
<dbReference type="EMDB" id="EMD-12910"/>
<dbReference type="EMDB" id="EMD-12911"/>
<dbReference type="EMDB" id="EMD-12912"/>
<dbReference type="EMDB" id="EMD-24269"/>
<dbReference type="EMDB" id="EMD-24286"/>
<dbReference type="EMDB" id="EMD-24296"/>
<dbReference type="EMDB" id="EMD-27919"/>
<dbReference type="EMDB" id="EMD-43017"/>
<dbReference type="EMDB" id="EMD-43021"/>
<dbReference type="EMDB" id="EMD-43027"/>
<dbReference type="EMDB" id="EMD-6878"/>
<dbReference type="EMDB" id="EMD-7324"/>
<dbReference type="SMR" id="Q03532"/>
<dbReference type="BioGRID" id="35470">
    <property type="interactions" value="477"/>
</dbReference>
<dbReference type="DIP" id="DIP-4396N"/>
<dbReference type="FunCoup" id="Q03532">
    <property type="interactions" value="1501"/>
</dbReference>
<dbReference type="IntAct" id="Q03532">
    <property type="interactions" value="89"/>
</dbReference>
<dbReference type="MINT" id="Q03532"/>
<dbReference type="STRING" id="4932.YMR290C"/>
<dbReference type="GlyGen" id="Q03532">
    <property type="glycosylation" value="1 site"/>
</dbReference>
<dbReference type="iPTMnet" id="Q03532"/>
<dbReference type="PaxDb" id="4932-YMR290C"/>
<dbReference type="PeptideAtlas" id="Q03532"/>
<dbReference type="EnsemblFungi" id="YMR290C_mRNA">
    <property type="protein sequence ID" value="YMR290C"/>
    <property type="gene ID" value="YMR290C"/>
</dbReference>
<dbReference type="GeneID" id="855335"/>
<dbReference type="KEGG" id="sce:YMR290C"/>
<dbReference type="AGR" id="SGD:S000004903"/>
<dbReference type="SGD" id="S000004903">
    <property type="gene designation" value="HAS1"/>
</dbReference>
<dbReference type="VEuPathDB" id="FungiDB:YMR290C"/>
<dbReference type="eggNOG" id="KOG0342">
    <property type="taxonomic scope" value="Eukaryota"/>
</dbReference>
<dbReference type="GeneTree" id="ENSGT00680000100037"/>
<dbReference type="HOGENOM" id="CLU_003041_26_5_1"/>
<dbReference type="InParanoid" id="Q03532"/>
<dbReference type="OMA" id="LMEFHSQ"/>
<dbReference type="OrthoDB" id="10259640at2759"/>
<dbReference type="BioCyc" id="YEAST:G3O-32960-MONOMER"/>
<dbReference type="SABIO-RK" id="Q03532"/>
<dbReference type="BioGRID-ORCS" id="855335">
    <property type="hits" value="2 hits in 10 CRISPR screens"/>
</dbReference>
<dbReference type="CD-CODE" id="BDAE0F88">
    <property type="entry name" value="Nucleolus"/>
</dbReference>
<dbReference type="CD-CODE" id="E03F929F">
    <property type="entry name" value="Stress granule"/>
</dbReference>
<dbReference type="PRO" id="PR:Q03532"/>
<dbReference type="Proteomes" id="UP000002311">
    <property type="component" value="Chromosome XIII"/>
</dbReference>
<dbReference type="RNAct" id="Q03532">
    <property type="molecule type" value="protein"/>
</dbReference>
<dbReference type="GO" id="GO:0030686">
    <property type="term" value="C:90S preribosome"/>
    <property type="evidence" value="ECO:0007005"/>
    <property type="project" value="SGD"/>
</dbReference>
<dbReference type="GO" id="GO:0005635">
    <property type="term" value="C:nuclear envelope"/>
    <property type="evidence" value="ECO:0000314"/>
    <property type="project" value="SGD"/>
</dbReference>
<dbReference type="GO" id="GO:0005730">
    <property type="term" value="C:nucleolus"/>
    <property type="evidence" value="ECO:0000314"/>
    <property type="project" value="SGD"/>
</dbReference>
<dbReference type="GO" id="GO:0030687">
    <property type="term" value="C:preribosome, large subunit precursor"/>
    <property type="evidence" value="ECO:0000314"/>
    <property type="project" value="SGD"/>
</dbReference>
<dbReference type="GO" id="GO:0032040">
    <property type="term" value="C:small-subunit processome"/>
    <property type="evidence" value="ECO:0000353"/>
    <property type="project" value="ComplexPortal"/>
</dbReference>
<dbReference type="GO" id="GO:0005524">
    <property type="term" value="F:ATP binding"/>
    <property type="evidence" value="ECO:0007669"/>
    <property type="project" value="UniProtKB-KW"/>
</dbReference>
<dbReference type="GO" id="GO:0016887">
    <property type="term" value="F:ATP hydrolysis activity"/>
    <property type="evidence" value="ECO:0007669"/>
    <property type="project" value="RHEA"/>
</dbReference>
<dbReference type="GO" id="GO:0008186">
    <property type="term" value="F:ATP-dependent activity, acting on RNA"/>
    <property type="evidence" value="ECO:0000314"/>
    <property type="project" value="SGD"/>
</dbReference>
<dbReference type="GO" id="GO:0042802">
    <property type="term" value="F:identical protein binding"/>
    <property type="evidence" value="ECO:0000353"/>
    <property type="project" value="IntAct"/>
</dbReference>
<dbReference type="GO" id="GO:0003723">
    <property type="term" value="F:RNA binding"/>
    <property type="evidence" value="ECO:0000314"/>
    <property type="project" value="SGD"/>
</dbReference>
<dbReference type="GO" id="GO:0003724">
    <property type="term" value="F:RNA helicase activity"/>
    <property type="evidence" value="ECO:0000314"/>
    <property type="project" value="SGD"/>
</dbReference>
<dbReference type="GO" id="GO:0000463">
    <property type="term" value="P:maturation of LSU-rRNA from tricistronic rRNA transcript (SSU-rRNA, 5.8S rRNA, LSU-rRNA)"/>
    <property type="evidence" value="ECO:0000315"/>
    <property type="project" value="SGD"/>
</dbReference>
<dbReference type="GO" id="GO:0030490">
    <property type="term" value="P:maturation of SSU-rRNA"/>
    <property type="evidence" value="ECO:0000303"/>
    <property type="project" value="ComplexPortal"/>
</dbReference>
<dbReference type="GO" id="GO:0000462">
    <property type="term" value="P:maturation of SSU-rRNA from tricistronic rRNA transcript (SSU-rRNA, 5.8S rRNA, LSU-rRNA)"/>
    <property type="evidence" value="ECO:0000315"/>
    <property type="project" value="SGD"/>
</dbReference>
<dbReference type="GO" id="GO:0042273">
    <property type="term" value="P:ribosomal large subunit biogenesis"/>
    <property type="evidence" value="ECO:0000315"/>
    <property type="project" value="SGD"/>
</dbReference>
<dbReference type="GO" id="GO:0042274">
    <property type="term" value="P:ribosomal small subunit biogenesis"/>
    <property type="evidence" value="ECO:0000315"/>
    <property type="project" value="SGD"/>
</dbReference>
<dbReference type="GO" id="GO:0006364">
    <property type="term" value="P:rRNA processing"/>
    <property type="evidence" value="ECO:0000315"/>
    <property type="project" value="SGD"/>
</dbReference>
<dbReference type="GO" id="GO:1990417">
    <property type="term" value="P:snoRNA release from pre-rRNA"/>
    <property type="evidence" value="ECO:0000315"/>
    <property type="project" value="SGD"/>
</dbReference>
<dbReference type="CDD" id="cd17942">
    <property type="entry name" value="DEADc_DDX18"/>
    <property type="match status" value="1"/>
</dbReference>
<dbReference type="CDD" id="cd18787">
    <property type="entry name" value="SF2_C_DEAD"/>
    <property type="match status" value="1"/>
</dbReference>
<dbReference type="FunFam" id="3.40.50.300:FF:000379">
    <property type="entry name" value="RNA helicase"/>
    <property type="match status" value="1"/>
</dbReference>
<dbReference type="FunFam" id="3.40.50.300:FF:000460">
    <property type="entry name" value="RNA helicase"/>
    <property type="match status" value="1"/>
</dbReference>
<dbReference type="Gene3D" id="3.40.50.300">
    <property type="entry name" value="P-loop containing nucleotide triphosphate hydrolases"/>
    <property type="match status" value="2"/>
</dbReference>
<dbReference type="InterPro" id="IPR044773">
    <property type="entry name" value="DDX18/Has1_DEADc"/>
</dbReference>
<dbReference type="InterPro" id="IPR011545">
    <property type="entry name" value="DEAD/DEAH_box_helicase_dom"/>
</dbReference>
<dbReference type="InterPro" id="IPR014001">
    <property type="entry name" value="Helicase_ATP-bd"/>
</dbReference>
<dbReference type="InterPro" id="IPR001650">
    <property type="entry name" value="Helicase_C-like"/>
</dbReference>
<dbReference type="InterPro" id="IPR027417">
    <property type="entry name" value="P-loop_NTPase"/>
</dbReference>
<dbReference type="InterPro" id="IPR000629">
    <property type="entry name" value="RNA-helicase_DEAD-box_CS"/>
</dbReference>
<dbReference type="InterPro" id="IPR014014">
    <property type="entry name" value="RNA_helicase_DEAD_Q_motif"/>
</dbReference>
<dbReference type="InterPro" id="IPR025313">
    <property type="entry name" value="SPB4-like_CTE"/>
</dbReference>
<dbReference type="PANTHER" id="PTHR24031">
    <property type="entry name" value="RNA HELICASE"/>
    <property type="match status" value="1"/>
</dbReference>
<dbReference type="Pfam" id="PF13959">
    <property type="entry name" value="CTE_SPB4"/>
    <property type="match status" value="1"/>
</dbReference>
<dbReference type="Pfam" id="PF00270">
    <property type="entry name" value="DEAD"/>
    <property type="match status" value="1"/>
</dbReference>
<dbReference type="Pfam" id="PF00271">
    <property type="entry name" value="Helicase_C"/>
    <property type="match status" value="1"/>
</dbReference>
<dbReference type="SMART" id="SM00487">
    <property type="entry name" value="DEXDc"/>
    <property type="match status" value="1"/>
</dbReference>
<dbReference type="SMART" id="SM01178">
    <property type="entry name" value="DUF4217"/>
    <property type="match status" value="1"/>
</dbReference>
<dbReference type="SMART" id="SM00490">
    <property type="entry name" value="HELICc"/>
    <property type="match status" value="1"/>
</dbReference>
<dbReference type="SUPFAM" id="SSF52540">
    <property type="entry name" value="P-loop containing nucleoside triphosphate hydrolases"/>
    <property type="match status" value="1"/>
</dbReference>
<dbReference type="PROSITE" id="PS00039">
    <property type="entry name" value="DEAD_ATP_HELICASE"/>
    <property type="match status" value="1"/>
</dbReference>
<dbReference type="PROSITE" id="PS51192">
    <property type="entry name" value="HELICASE_ATP_BIND_1"/>
    <property type="match status" value="1"/>
</dbReference>
<dbReference type="PROSITE" id="PS51194">
    <property type="entry name" value="HELICASE_CTER"/>
    <property type="match status" value="1"/>
</dbReference>
<dbReference type="PROSITE" id="PS51195">
    <property type="entry name" value="Q_MOTIF"/>
    <property type="match status" value="1"/>
</dbReference>
<reference key="1">
    <citation type="journal article" date="1997" name="Nature">
        <title>The nucleotide sequence of Saccharomyces cerevisiae chromosome XIII.</title>
        <authorList>
            <person name="Bowman S."/>
            <person name="Churcher C.M."/>
            <person name="Badcock K."/>
            <person name="Brown D."/>
            <person name="Chillingworth T."/>
            <person name="Connor R."/>
            <person name="Dedman K."/>
            <person name="Devlin K."/>
            <person name="Gentles S."/>
            <person name="Hamlin N."/>
            <person name="Hunt S."/>
            <person name="Jagels K."/>
            <person name="Lye G."/>
            <person name="Moule S."/>
            <person name="Odell C."/>
            <person name="Pearson D."/>
            <person name="Rajandream M.A."/>
            <person name="Rice P."/>
            <person name="Skelton J."/>
            <person name="Walsh S.V."/>
            <person name="Whitehead S."/>
            <person name="Barrell B.G."/>
        </authorList>
    </citation>
    <scope>NUCLEOTIDE SEQUENCE [LARGE SCALE GENOMIC DNA]</scope>
    <source>
        <strain>ATCC 204508 / S288c</strain>
    </source>
</reference>
<reference key="2">
    <citation type="journal article" date="2014" name="G3 (Bethesda)">
        <title>The reference genome sequence of Saccharomyces cerevisiae: Then and now.</title>
        <authorList>
            <person name="Engel S.R."/>
            <person name="Dietrich F.S."/>
            <person name="Fisk D.G."/>
            <person name="Binkley G."/>
            <person name="Balakrishnan R."/>
            <person name="Costanzo M.C."/>
            <person name="Dwight S.S."/>
            <person name="Hitz B.C."/>
            <person name="Karra K."/>
            <person name="Nash R.S."/>
            <person name="Weng S."/>
            <person name="Wong E.D."/>
            <person name="Lloyd P."/>
            <person name="Skrzypek M.S."/>
            <person name="Miyasato S.R."/>
            <person name="Simison M."/>
            <person name="Cherry J.M."/>
        </authorList>
    </citation>
    <scope>GENOME REANNOTATION</scope>
    <source>
        <strain>ATCC 204508 / S288c</strain>
    </source>
</reference>
<reference key="3">
    <citation type="journal article" date="1997" name="Mol. Biol. Cell">
        <title>SET1, a yeast member of the Trithorax family, functions in transcriptional silencing and diverse cellular processes.</title>
        <authorList>
            <person name="Nislow C."/>
            <person name="Ray E."/>
            <person name="Pillus L."/>
        </authorList>
    </citation>
    <scope>SET1 DEPENDENT EXPRESSION</scope>
</reference>
<reference key="4">
    <citation type="journal article" date="2000" name="J. Cell Biol.">
        <title>The yeast nuclear pore complex: composition, architecture, and transport mechanism.</title>
        <authorList>
            <person name="Rout M.P."/>
            <person name="Aitchison J.D."/>
            <person name="Suprapto A."/>
            <person name="Hjertaas K."/>
            <person name="Zhao Y."/>
            <person name="Chait B.T."/>
        </authorList>
    </citation>
    <scope>SUBCELLULAR LOCATION</scope>
    <scope>ASSOCIATION WITH NUCLEAR PORE</scope>
</reference>
<reference key="5">
    <citation type="journal article" date="2003" name="Nature">
        <title>Targets of the cyclin-dependent kinase Cdk1.</title>
        <authorList>
            <person name="Ubersax J.A."/>
            <person name="Woodbury E.L."/>
            <person name="Quang P.N."/>
            <person name="Paraz M."/>
            <person name="Blethrow J.D."/>
            <person name="Shah K."/>
            <person name="Shokat K.M."/>
            <person name="Morgan D.O."/>
        </authorList>
    </citation>
    <scope>PHOSPHORYLATION</scope>
</reference>
<reference key="6">
    <citation type="journal article" date="2004" name="Mol. Microbiol.">
        <title>Has1p, a member of the DEAD-box family, is required for 40S ribosomal subunit biogenesis in Saccharomyces cerevisiae.</title>
        <authorList>
            <person name="Emery B."/>
            <person name="de la Cruz J."/>
            <person name="Rocak S."/>
            <person name="Deloche O."/>
            <person name="Linder P."/>
        </authorList>
    </citation>
    <scope>FUNCTION</scope>
    <scope>SUBCELLULAR LOCATION</scope>
    <scope>MUTAGENESIS OF LYS-92; HIS-105; PRO-315 AND PHE-393</scope>
</reference>
<reference key="7">
    <citation type="journal article" date="2004" name="Cell">
        <title>Exploration of essential gene functions via titratable promoter alleles.</title>
        <authorList>
            <person name="Mnaimneh S."/>
            <person name="Davierwala A.P."/>
            <person name="Haynes J."/>
            <person name="Moffat J."/>
            <person name="Peng W.-T."/>
            <person name="Zhang W."/>
            <person name="Yang X."/>
            <person name="Pootoolal J."/>
            <person name="Chua G."/>
            <person name="Lopez A."/>
            <person name="Trochesset M."/>
            <person name="Morse D."/>
            <person name="Krogan N.J."/>
            <person name="Hiley S.L."/>
            <person name="Li Z."/>
            <person name="Morris Q."/>
            <person name="Grigull J."/>
            <person name="Mitsakakis N."/>
            <person name="Roberts C.J."/>
            <person name="Greenblatt J.F."/>
            <person name="Boone C."/>
            <person name="Kaiser C.A."/>
            <person name="Andrews B.J."/>
            <person name="Hughes T.R."/>
        </authorList>
    </citation>
    <scope>FUNCTION</scope>
</reference>
<reference key="8">
    <citation type="journal article" date="2004" name="RNA">
        <title>Role of the yeast Rrp1 protein in the dynamics of pre-ribosome maturation.</title>
        <authorList>
            <person name="Horsey E.W."/>
            <person name="Jakovljevic J."/>
            <person name="Miles T.D."/>
            <person name="Harnpicharnchai P."/>
            <person name="Woolford J.L. Jr."/>
        </authorList>
    </citation>
    <scope>INTERACTION WITH RRP1</scope>
    <scope>IDENTIFICATION BY MASS SPECTROMETRY</scope>
</reference>
<reference key="9">
    <citation type="journal article" date="2005" name="Nucleic Acids Res.">
        <title>Characterization of the ATPase and unwinding activities of the yeast DEAD-box protein Has1p and the analysis of the roles of the conserved motifs.</title>
        <authorList>
            <person name="Rocak S."/>
            <person name="Emery B."/>
            <person name="Tanner N.K."/>
            <person name="Linder P."/>
        </authorList>
    </citation>
    <scope>FUNCTION</scope>
    <scope>BIOPHYSICOCHEMICAL PROPERTIES</scope>
    <scope>MUTAGENESIS OF LYS-92; SER-228; THR-230; HIS-375; ARG-376 AND LYS-389</scope>
</reference>
<reference key="10">
    <citation type="journal article" date="2005" name="RNA">
        <title>Rrp15p, a novel component of pre-ribosomal particles required for 60S ribosome subunit maturation.</title>
        <authorList>
            <person name="De Marchis M.L."/>
            <person name="Giorgi A."/>
            <person name="Schinina M.E."/>
            <person name="Bozzoni I."/>
            <person name="Fatica A."/>
        </authorList>
    </citation>
    <scope>INTERACTION WITH RRP15</scope>
    <scope>IDENTIFICATION BY MASS SPECTROMETRY</scope>
</reference>
<reference key="11">
    <citation type="journal article" date="2007" name="Proc. Natl. Acad. Sci. U.S.A.">
        <title>Analysis of phosphorylation sites on proteins from Saccharomyces cerevisiae by electron transfer dissociation (ETD) mass spectrometry.</title>
        <authorList>
            <person name="Chi A."/>
            <person name="Huttenhower C."/>
            <person name="Geer L.Y."/>
            <person name="Coon J.J."/>
            <person name="Syka J.E.P."/>
            <person name="Bai D.L."/>
            <person name="Shabanowitz J."/>
            <person name="Burke D.J."/>
            <person name="Troyanskaya O.G."/>
            <person name="Hunt D.F."/>
        </authorList>
    </citation>
    <scope>PHOSPHORYLATION [LARGE SCALE ANALYSIS] AT SER-12</scope>
    <scope>IDENTIFICATION BY MASS SPECTROMETRY [LARGE SCALE ANALYSIS]</scope>
</reference>
<reference key="12">
    <citation type="journal article" date="2008" name="Mol. Cell. Proteomics">
        <title>A multidimensional chromatography technology for in-depth phosphoproteome analysis.</title>
        <authorList>
            <person name="Albuquerque C.P."/>
            <person name="Smolka M.B."/>
            <person name="Payne S.H."/>
            <person name="Bafna V."/>
            <person name="Eng J."/>
            <person name="Zhou H."/>
        </authorList>
    </citation>
    <scope>IDENTIFICATION BY MASS SPECTROMETRY [LARGE SCALE ANALYSIS]</scope>
</reference>
<reference key="13">
    <citation type="journal article" date="2009" name="Science">
        <title>Global analysis of Cdk1 substrate phosphorylation sites provides insights into evolution.</title>
        <authorList>
            <person name="Holt L.J."/>
            <person name="Tuch B.B."/>
            <person name="Villen J."/>
            <person name="Johnson A.D."/>
            <person name="Gygi S.P."/>
            <person name="Morgan D.O."/>
        </authorList>
    </citation>
    <scope>PHOSPHORYLATION [LARGE SCALE ANALYSIS] AT SER-12</scope>
    <scope>IDENTIFICATION BY MASS SPECTROMETRY [LARGE SCALE ANALYSIS]</scope>
</reference>
<proteinExistence type="evidence at protein level"/>
<feature type="chain" id="PRO_0000055046" description="ATP-dependent RNA helicase HAS1">
    <location>
        <begin position="1"/>
        <end position="505"/>
    </location>
</feature>
<feature type="domain" description="Helicase ATP-binding" evidence="1">
    <location>
        <begin position="73"/>
        <end position="249"/>
    </location>
</feature>
<feature type="domain" description="Helicase C-terminal" evidence="2">
    <location>
        <begin position="263"/>
        <end position="433"/>
    </location>
</feature>
<feature type="region of interest" description="Disordered" evidence="3">
    <location>
        <begin position="1"/>
        <end position="37"/>
    </location>
</feature>
<feature type="short sequence motif" description="Q motif">
    <location>
        <begin position="42"/>
        <end position="70"/>
    </location>
</feature>
<feature type="short sequence motif" description="DEAD box">
    <location>
        <begin position="196"/>
        <end position="199"/>
    </location>
</feature>
<feature type="short sequence motif" description="Bipartite nuclear localization signal" evidence="10">
    <location>
        <begin position="275"/>
        <end position="291"/>
    </location>
</feature>
<feature type="compositionally biased region" description="Polar residues" evidence="3">
    <location>
        <begin position="26"/>
        <end position="37"/>
    </location>
</feature>
<feature type="binding site">
    <location>
        <begin position="86"/>
        <end position="93"/>
    </location>
    <ligand>
        <name>ATP</name>
        <dbReference type="ChEBI" id="CHEBI:30616"/>
    </ligand>
</feature>
<feature type="modified residue" description="Phosphoserine" evidence="12 13">
    <location>
        <position position="12"/>
    </location>
</feature>
<feature type="mutagenesis site" description="Lethal in vivo and impairs ATPase with 2-5% of wild-type ATPase activity, a 20-fold higher KM for ATP and prevents RNA/DNA heteroduplexes unwinding activity in vitro. Leads to 13% of wild-type ATPase activity and higher RNA/DNA heteroduplexes unwinding activity in vitro; when associated with A-389." evidence="5 8">
    <original>K</original>
    <variation>A</variation>
    <location>
        <position position="92"/>
    </location>
</feature>
<feature type="mutagenesis site" description="Decreases the amount of 40S ribosomal subunits at 37 degrees Celsius; when associated with S-315 and S-393." evidence="5">
    <original>H</original>
    <variation>Y</variation>
    <location>
        <position position="105"/>
    </location>
</feature>
<feature type="mutagenesis site" description="Slow growth at 18 and 16 degrees Celsius, no growth at 14 degrees Celsius and drastic decrease of the amount of 40S ribosomal subunits at 30 degrees Celsius in vivo. Leads to 70-80% of wild-type ATPase activity, a 2-fold lower KM for ATP and a slightly reduced RNA/DNA heteroduplexes unwinding activity in vitro." evidence="8">
    <original>S</original>
    <variation>A</variation>
    <location>
        <position position="228"/>
    </location>
</feature>
<feature type="mutagenesis site" description="Lethal in vivo and leads to 70-80% of wild-type ATPase activity, a 2-fold lower KM for ATP and a reduced RNA/DNA heteroduplexes unwinding activity in vitro." evidence="8">
    <original>T</original>
    <variation>A</variation>
    <location>
        <position position="230"/>
    </location>
</feature>
<feature type="mutagenesis site" description="Decreases the amount of 40S ribosomal subunits at 37 degrees Celsius; when associated with Y-105 and S-393." evidence="5">
    <original>P</original>
    <variation>S</variation>
    <location>
        <position position="315"/>
    </location>
</feature>
<feature type="mutagenesis site" description="Lethal in vivo and leads to 70-80% of wild-type ATPase activity, a 2-fold lower KM for ATP and a reduced RNA/DNA heteroduplexes unwinding activity in vitro." evidence="8">
    <original>H</original>
    <variation>E</variation>
    <location>
        <position position="375"/>
    </location>
</feature>
<feature type="mutagenesis site" description="Lethal in vivo and leads to less than 30% of wild-type ATPase activity and a 2-fold lower KM for ATP in vitro." evidence="8">
    <original>R</original>
    <variation>A</variation>
    <location>
        <position position="376"/>
    </location>
</feature>
<feature type="mutagenesis site" description="Increases 3-fold the ATPase activity and a higher RNA/DNA heteroduplexes unwinding activity in vitro. Leads to 13% of wild-type ATPase activity and lower RNA/DNA heteroduplexes unwinding activity in vitro; when associated with A-92." evidence="8">
    <original>K</original>
    <variation>A</variation>
    <location>
        <position position="389"/>
    </location>
</feature>
<feature type="mutagenesis site" description="Decreases the amount of 40S ribosomal subunits at 37 degrees Celsius; when associated with Y-105 and S-315." evidence="5">
    <original>F</original>
    <variation>S</variation>
    <location>
        <position position="393"/>
    </location>
</feature>
<feature type="helix" evidence="14">
    <location>
        <begin position="44"/>
        <end position="46"/>
    </location>
</feature>
<feature type="helix" evidence="14">
    <location>
        <begin position="51"/>
        <end position="60"/>
    </location>
</feature>
<feature type="helix" evidence="14">
    <location>
        <begin position="67"/>
        <end position="70"/>
    </location>
</feature>
<feature type="helix" evidence="14">
    <location>
        <begin position="73"/>
        <end position="77"/>
    </location>
</feature>
<feature type="strand" evidence="14">
    <location>
        <begin position="82"/>
        <end position="84"/>
    </location>
</feature>
<feature type="helix" evidence="14">
    <location>
        <begin position="92"/>
        <end position="107"/>
    </location>
</feature>
<feature type="helix" evidence="14">
    <location>
        <begin position="111"/>
        <end position="113"/>
    </location>
</feature>
<feature type="strand" evidence="14">
    <location>
        <begin position="117"/>
        <end position="120"/>
    </location>
</feature>
<feature type="helix" evidence="14">
    <location>
        <begin position="124"/>
        <end position="137"/>
    </location>
</feature>
<feature type="strand" evidence="14">
    <location>
        <begin position="139"/>
        <end position="142"/>
    </location>
</feature>
<feature type="strand" evidence="14">
    <location>
        <begin position="145"/>
        <end position="148"/>
    </location>
</feature>
<feature type="helix" evidence="14">
    <location>
        <begin position="154"/>
        <end position="163"/>
    </location>
</feature>
<feature type="strand" evidence="14">
    <location>
        <begin position="166"/>
        <end position="170"/>
    </location>
</feature>
<feature type="helix" evidence="14">
    <location>
        <begin position="172"/>
        <end position="181"/>
    </location>
</feature>
<feature type="strand" evidence="14">
    <location>
        <begin position="192"/>
        <end position="195"/>
    </location>
</feature>
<feature type="helix" evidence="14">
    <location>
        <begin position="198"/>
        <end position="204"/>
    </location>
</feature>
<feature type="helix" evidence="14">
    <location>
        <begin position="207"/>
        <end position="216"/>
    </location>
</feature>
<feature type="strand" evidence="14">
    <location>
        <begin position="223"/>
        <end position="227"/>
    </location>
</feature>
<feature type="helix" evidence="14">
    <location>
        <begin position="233"/>
        <end position="240"/>
    </location>
</feature>
<feature type="strand" evidence="14">
    <location>
        <begin position="266"/>
        <end position="270"/>
    </location>
</feature>
<feature type="turn" evidence="14">
    <location>
        <begin position="273"/>
        <end position="275"/>
    </location>
</feature>
<feature type="helix" evidence="14">
    <location>
        <begin position="276"/>
        <end position="286"/>
    </location>
</feature>
<feature type="turn" evidence="14">
    <location>
        <begin position="287"/>
        <end position="289"/>
    </location>
</feature>
<feature type="strand" evidence="14">
    <location>
        <begin position="290"/>
        <end position="297"/>
    </location>
</feature>
<feature type="helix" evidence="14">
    <location>
        <begin position="299"/>
        <end position="311"/>
    </location>
</feature>
<feature type="strand" evidence="14">
    <location>
        <begin position="316"/>
        <end position="319"/>
    </location>
</feature>
<feature type="helix" evidence="14">
    <location>
        <begin position="325"/>
        <end position="335"/>
    </location>
</feature>
<feature type="strand" evidence="14">
    <location>
        <begin position="338"/>
        <end position="346"/>
    </location>
</feature>
<feature type="turn" evidence="14">
    <location>
        <begin position="347"/>
        <end position="351"/>
    </location>
</feature>
<feature type="strand" evidence="14">
    <location>
        <begin position="359"/>
        <end position="363"/>
    </location>
</feature>
<feature type="helix" evidence="14">
    <location>
        <begin position="370"/>
        <end position="383"/>
    </location>
</feature>
<feature type="strand" evidence="14">
    <location>
        <begin position="389"/>
        <end position="394"/>
    </location>
</feature>
<feature type="turn" evidence="14">
    <location>
        <begin position="397"/>
        <end position="400"/>
    </location>
</feature>
<feature type="helix" evidence="14">
    <location>
        <begin position="401"/>
        <end position="407"/>
    </location>
</feature>
<feature type="strand" evidence="14">
    <location>
        <begin position="412"/>
        <end position="416"/>
    </location>
</feature>
<feature type="helix" evidence="14">
    <location>
        <begin position="419"/>
        <end position="421"/>
    </location>
</feature>
<feature type="helix" evidence="14">
    <location>
        <begin position="426"/>
        <end position="435"/>
    </location>
</feature>
<feature type="helix" evidence="14">
    <location>
        <begin position="437"/>
        <end position="455"/>
    </location>
</feature>
<feature type="turn" evidence="14">
    <location>
        <begin position="460"/>
        <end position="462"/>
    </location>
</feature>
<feature type="helix" evidence="14">
    <location>
        <begin position="465"/>
        <end position="467"/>
    </location>
</feature>
<feature type="helix" evidence="14">
    <location>
        <begin position="470"/>
        <end position="475"/>
    </location>
</feature>
<feature type="turn" evidence="14">
    <location>
        <begin position="476"/>
        <end position="478"/>
    </location>
</feature>